<reference key="1">
    <citation type="submission" date="2007-07" db="EMBL/GenBank/DDBJ databases">
        <title>Complete genome sequence of Campylobacter hominis ATCC BAA-381, a commensal isolated from the human gastrointestinal tract.</title>
        <authorList>
            <person name="Fouts D.E."/>
            <person name="Mongodin E.F."/>
            <person name="Puiu D."/>
            <person name="Sebastian Y."/>
            <person name="Miller W.G."/>
            <person name="Mandrell R.E."/>
            <person name="Nelson K.E."/>
        </authorList>
    </citation>
    <scope>NUCLEOTIDE SEQUENCE [LARGE SCALE GENOMIC DNA]</scope>
    <source>
        <strain>ATCC BAA-381 / DSM 21671 / CCUG 45161 / LMG 19568 / NCTC 13146 / CH001A</strain>
    </source>
</reference>
<comment type="function">
    <text evidence="1">Catalyzes the attachment of serine to tRNA(Ser). Is also able to aminoacylate tRNA(Sec) with serine, to form the misacylated tRNA L-seryl-tRNA(Sec), which will be further converted into selenocysteinyl-tRNA(Sec).</text>
</comment>
<comment type="catalytic activity">
    <reaction evidence="1">
        <text>tRNA(Ser) + L-serine + ATP = L-seryl-tRNA(Ser) + AMP + diphosphate + H(+)</text>
        <dbReference type="Rhea" id="RHEA:12292"/>
        <dbReference type="Rhea" id="RHEA-COMP:9669"/>
        <dbReference type="Rhea" id="RHEA-COMP:9703"/>
        <dbReference type="ChEBI" id="CHEBI:15378"/>
        <dbReference type="ChEBI" id="CHEBI:30616"/>
        <dbReference type="ChEBI" id="CHEBI:33019"/>
        <dbReference type="ChEBI" id="CHEBI:33384"/>
        <dbReference type="ChEBI" id="CHEBI:78442"/>
        <dbReference type="ChEBI" id="CHEBI:78533"/>
        <dbReference type="ChEBI" id="CHEBI:456215"/>
        <dbReference type="EC" id="6.1.1.11"/>
    </reaction>
</comment>
<comment type="catalytic activity">
    <reaction evidence="1">
        <text>tRNA(Sec) + L-serine + ATP = L-seryl-tRNA(Sec) + AMP + diphosphate + H(+)</text>
        <dbReference type="Rhea" id="RHEA:42580"/>
        <dbReference type="Rhea" id="RHEA-COMP:9742"/>
        <dbReference type="Rhea" id="RHEA-COMP:10128"/>
        <dbReference type="ChEBI" id="CHEBI:15378"/>
        <dbReference type="ChEBI" id="CHEBI:30616"/>
        <dbReference type="ChEBI" id="CHEBI:33019"/>
        <dbReference type="ChEBI" id="CHEBI:33384"/>
        <dbReference type="ChEBI" id="CHEBI:78442"/>
        <dbReference type="ChEBI" id="CHEBI:78533"/>
        <dbReference type="ChEBI" id="CHEBI:456215"/>
        <dbReference type="EC" id="6.1.1.11"/>
    </reaction>
</comment>
<comment type="pathway">
    <text evidence="1">Aminoacyl-tRNA biosynthesis; selenocysteinyl-tRNA(Sec) biosynthesis; L-seryl-tRNA(Sec) from L-serine and tRNA(Sec): step 1/1.</text>
</comment>
<comment type="subunit">
    <text evidence="1">Homodimer. The tRNA molecule binds across the dimer.</text>
</comment>
<comment type="subcellular location">
    <subcellularLocation>
        <location evidence="1">Cytoplasm</location>
    </subcellularLocation>
</comment>
<comment type="domain">
    <text evidence="1">Consists of two distinct domains, a catalytic core and a N-terminal extension that is involved in tRNA binding.</text>
</comment>
<comment type="similarity">
    <text evidence="1">Belongs to the class-II aminoacyl-tRNA synthetase family. Type-1 seryl-tRNA synthetase subfamily.</text>
</comment>
<accession>A7HZX6</accession>
<proteinExistence type="inferred from homology"/>
<dbReference type="EC" id="6.1.1.11" evidence="1"/>
<dbReference type="EMBL" id="CP000776">
    <property type="protein sequence ID" value="ABS52314.1"/>
    <property type="molecule type" value="Genomic_DNA"/>
</dbReference>
<dbReference type="RefSeq" id="WP_012108098.1">
    <property type="nucleotide sequence ID" value="NC_009714.1"/>
</dbReference>
<dbReference type="SMR" id="A7HZX6"/>
<dbReference type="STRING" id="360107.CHAB381_0210"/>
<dbReference type="KEGG" id="cha:CHAB381_0210"/>
<dbReference type="eggNOG" id="COG0172">
    <property type="taxonomic scope" value="Bacteria"/>
</dbReference>
<dbReference type="HOGENOM" id="CLU_023797_1_1_7"/>
<dbReference type="OrthoDB" id="9804647at2"/>
<dbReference type="UniPathway" id="UPA00906">
    <property type="reaction ID" value="UER00895"/>
</dbReference>
<dbReference type="Proteomes" id="UP000002407">
    <property type="component" value="Chromosome"/>
</dbReference>
<dbReference type="GO" id="GO:0005737">
    <property type="term" value="C:cytoplasm"/>
    <property type="evidence" value="ECO:0007669"/>
    <property type="project" value="UniProtKB-SubCell"/>
</dbReference>
<dbReference type="GO" id="GO:0005524">
    <property type="term" value="F:ATP binding"/>
    <property type="evidence" value="ECO:0007669"/>
    <property type="project" value="UniProtKB-UniRule"/>
</dbReference>
<dbReference type="GO" id="GO:0004828">
    <property type="term" value="F:serine-tRNA ligase activity"/>
    <property type="evidence" value="ECO:0007669"/>
    <property type="project" value="UniProtKB-UniRule"/>
</dbReference>
<dbReference type="GO" id="GO:0016260">
    <property type="term" value="P:selenocysteine biosynthetic process"/>
    <property type="evidence" value="ECO:0007669"/>
    <property type="project" value="UniProtKB-UniRule"/>
</dbReference>
<dbReference type="GO" id="GO:0006434">
    <property type="term" value="P:seryl-tRNA aminoacylation"/>
    <property type="evidence" value="ECO:0007669"/>
    <property type="project" value="UniProtKB-UniRule"/>
</dbReference>
<dbReference type="CDD" id="cd00770">
    <property type="entry name" value="SerRS_core"/>
    <property type="match status" value="1"/>
</dbReference>
<dbReference type="Gene3D" id="3.30.930.10">
    <property type="entry name" value="Bira Bifunctional Protein, Domain 2"/>
    <property type="match status" value="1"/>
</dbReference>
<dbReference type="Gene3D" id="1.10.287.40">
    <property type="entry name" value="Serine-tRNA synthetase, tRNA binding domain"/>
    <property type="match status" value="1"/>
</dbReference>
<dbReference type="HAMAP" id="MF_00176">
    <property type="entry name" value="Ser_tRNA_synth_type1"/>
    <property type="match status" value="1"/>
</dbReference>
<dbReference type="InterPro" id="IPR002314">
    <property type="entry name" value="aa-tRNA-synt_IIb"/>
</dbReference>
<dbReference type="InterPro" id="IPR006195">
    <property type="entry name" value="aa-tRNA-synth_II"/>
</dbReference>
<dbReference type="InterPro" id="IPR045864">
    <property type="entry name" value="aa-tRNA-synth_II/BPL/LPL"/>
</dbReference>
<dbReference type="InterPro" id="IPR002317">
    <property type="entry name" value="Ser-tRNA-ligase_type_1"/>
</dbReference>
<dbReference type="InterPro" id="IPR015866">
    <property type="entry name" value="Ser-tRNA-synth_1_N"/>
</dbReference>
<dbReference type="InterPro" id="IPR042103">
    <property type="entry name" value="SerRS_1_N_sf"/>
</dbReference>
<dbReference type="InterPro" id="IPR033729">
    <property type="entry name" value="SerRS_core"/>
</dbReference>
<dbReference type="InterPro" id="IPR010978">
    <property type="entry name" value="tRNA-bd_arm"/>
</dbReference>
<dbReference type="NCBIfam" id="TIGR00414">
    <property type="entry name" value="serS"/>
    <property type="match status" value="1"/>
</dbReference>
<dbReference type="PANTHER" id="PTHR43697:SF1">
    <property type="entry name" value="SERINE--TRNA LIGASE"/>
    <property type="match status" value="1"/>
</dbReference>
<dbReference type="PANTHER" id="PTHR43697">
    <property type="entry name" value="SERYL-TRNA SYNTHETASE"/>
    <property type="match status" value="1"/>
</dbReference>
<dbReference type="Pfam" id="PF02403">
    <property type="entry name" value="Seryl_tRNA_N"/>
    <property type="match status" value="1"/>
</dbReference>
<dbReference type="Pfam" id="PF00587">
    <property type="entry name" value="tRNA-synt_2b"/>
    <property type="match status" value="1"/>
</dbReference>
<dbReference type="PIRSF" id="PIRSF001529">
    <property type="entry name" value="Ser-tRNA-synth_IIa"/>
    <property type="match status" value="1"/>
</dbReference>
<dbReference type="PRINTS" id="PR00981">
    <property type="entry name" value="TRNASYNTHSER"/>
</dbReference>
<dbReference type="SUPFAM" id="SSF55681">
    <property type="entry name" value="Class II aaRS and biotin synthetases"/>
    <property type="match status" value="1"/>
</dbReference>
<dbReference type="SUPFAM" id="SSF46589">
    <property type="entry name" value="tRNA-binding arm"/>
    <property type="match status" value="1"/>
</dbReference>
<dbReference type="PROSITE" id="PS50862">
    <property type="entry name" value="AA_TRNA_LIGASE_II"/>
    <property type="match status" value="1"/>
</dbReference>
<name>SYS_CAMHC</name>
<organism>
    <name type="scientific">Campylobacter hominis (strain ATCC BAA-381 / DSM 21671 / CCUG 45161 / LMG 19568 / NCTC 13146 / CH001A)</name>
    <dbReference type="NCBI Taxonomy" id="360107"/>
    <lineage>
        <taxon>Bacteria</taxon>
        <taxon>Pseudomonadati</taxon>
        <taxon>Campylobacterota</taxon>
        <taxon>Epsilonproteobacteria</taxon>
        <taxon>Campylobacterales</taxon>
        <taxon>Campylobacteraceae</taxon>
        <taxon>Campylobacter</taxon>
    </lineage>
</organism>
<protein>
    <recommendedName>
        <fullName evidence="1">Serine--tRNA ligase</fullName>
        <ecNumber evidence="1">6.1.1.11</ecNumber>
    </recommendedName>
    <alternativeName>
        <fullName evidence="1">Seryl-tRNA synthetase</fullName>
        <shortName evidence="1">SerRS</shortName>
    </alternativeName>
    <alternativeName>
        <fullName evidence="1">Seryl-tRNA(Ser/Sec) synthetase</fullName>
    </alternativeName>
</protein>
<feature type="chain" id="PRO_1000019643" description="Serine--tRNA ligase">
    <location>
        <begin position="1"/>
        <end position="417"/>
    </location>
</feature>
<feature type="binding site" evidence="1">
    <location>
        <begin position="232"/>
        <end position="234"/>
    </location>
    <ligand>
        <name>L-serine</name>
        <dbReference type="ChEBI" id="CHEBI:33384"/>
    </ligand>
</feature>
<feature type="binding site" evidence="1">
    <location>
        <begin position="263"/>
        <end position="265"/>
    </location>
    <ligand>
        <name>ATP</name>
        <dbReference type="ChEBI" id="CHEBI:30616"/>
    </ligand>
</feature>
<feature type="binding site" evidence="1">
    <location>
        <position position="286"/>
    </location>
    <ligand>
        <name>L-serine</name>
        <dbReference type="ChEBI" id="CHEBI:33384"/>
    </ligand>
</feature>
<feature type="binding site" evidence="1">
    <location>
        <begin position="350"/>
        <end position="353"/>
    </location>
    <ligand>
        <name>ATP</name>
        <dbReference type="ChEBI" id="CHEBI:30616"/>
    </ligand>
</feature>
<feature type="binding site" evidence="1">
    <location>
        <position position="385"/>
    </location>
    <ligand>
        <name>L-serine</name>
        <dbReference type="ChEBI" id="CHEBI:33384"/>
    </ligand>
</feature>
<evidence type="ECO:0000255" key="1">
    <source>
        <dbReference type="HAMAP-Rule" id="MF_00176"/>
    </source>
</evidence>
<sequence length="417" mass="47298">MINLKLIETNFDEFNKKLIAKNVKNDVLSTLLEAYDELKKDRLELENLQNLQNTKSKEFGEIMRQKGDAGELKKELSINKSKIQTQSEIVKAAEIKLDKIASCVPNIIDDDVPFGADENENVCIKKILQPPVFDFQPKEHFELGEKLGWLDFERGVKLSGSRFTAIKGMGAKLNLAIINYMIDFNQSRGFELVNLPFLVKDEILFGTGQLPKFKDDLYKVDNDELSLYLIPTSEVTATNFYNGEILSEDELPVKFTSYSHCFRKEAGSAGKDTRGMIRQHQFEKVELVSITKPEDSDKMFDEMVSCASDLLKSLGLAHRQMMLCSGDLGFSAAKTIDLEVWLPGQNTYREISSISNCRDFQARRAKIRYKDKNGKNRLVNTLNGSSLAVGRTLVAIMENYQQKDGSIKIPKVLEEYL</sequence>
<keyword id="KW-0030">Aminoacyl-tRNA synthetase</keyword>
<keyword id="KW-0067">ATP-binding</keyword>
<keyword id="KW-0963">Cytoplasm</keyword>
<keyword id="KW-0436">Ligase</keyword>
<keyword id="KW-0547">Nucleotide-binding</keyword>
<keyword id="KW-0648">Protein biosynthesis</keyword>
<keyword id="KW-1185">Reference proteome</keyword>
<gene>
    <name evidence="1" type="primary">serS</name>
    <name type="ordered locus">CHAB381_0210</name>
</gene>